<name>ACCD1_LACE2</name>
<comment type="function">
    <text evidence="1">Component of the acetyl coenzyme A carboxylase (ACC) complex. Biotin carboxylase (BC) catalyzes the carboxylation of biotin on its carrier protein (BCCP) and then the CO(2) group is transferred by the transcarboxylase to acetyl-CoA to form malonyl-CoA.</text>
</comment>
<comment type="catalytic activity">
    <reaction evidence="1">
        <text>N(6)-carboxybiotinyl-L-lysyl-[protein] + acetyl-CoA = N(6)-biotinyl-L-lysyl-[protein] + malonyl-CoA</text>
        <dbReference type="Rhea" id="RHEA:54728"/>
        <dbReference type="Rhea" id="RHEA-COMP:10505"/>
        <dbReference type="Rhea" id="RHEA-COMP:10506"/>
        <dbReference type="ChEBI" id="CHEBI:57288"/>
        <dbReference type="ChEBI" id="CHEBI:57384"/>
        <dbReference type="ChEBI" id="CHEBI:83144"/>
        <dbReference type="ChEBI" id="CHEBI:83145"/>
        <dbReference type="EC" id="2.1.3.15"/>
    </reaction>
</comment>
<comment type="pathway">
    <text evidence="1">Lipid metabolism; malonyl-CoA biosynthesis; malonyl-CoA from acetyl-CoA: step 1/1.</text>
</comment>
<comment type="subunit">
    <text evidence="1">Acetyl-CoA carboxylase is a heterohexamer composed of biotin carboxyl carrier protein (AccB), biotin carboxylase (AccC) and two subunits each of ACCase subunit alpha (AccA) and ACCase subunit beta (AccD).</text>
</comment>
<comment type="subcellular location">
    <subcellularLocation>
        <location evidence="1">Cytoplasm</location>
    </subcellularLocation>
</comment>
<comment type="similarity">
    <text evidence="1">Belongs to the AccD/PCCB family.</text>
</comment>
<organism>
    <name type="scientific">Lachnospira eligens (strain ATCC 27750 / DSM 3376 / VPI C15-48 / C15-B4)</name>
    <name type="common">Eubacterium eligens</name>
    <dbReference type="NCBI Taxonomy" id="515620"/>
    <lineage>
        <taxon>Bacteria</taxon>
        <taxon>Bacillati</taxon>
        <taxon>Bacillota</taxon>
        <taxon>Clostridia</taxon>
        <taxon>Lachnospirales</taxon>
        <taxon>Lachnospiraceae</taxon>
        <taxon>Lachnospira</taxon>
    </lineage>
</organism>
<sequence>MNINDIFLKRKKRWGIINRLRDSEEQADGSLTPSRRIALISDDKSFRELYAQVKTGNPNSFPGYEQKVEANRLKTGQQDAVVTGTCRIGGVKTAVAVMDKRFLMGSMGIAVGEKITRLTEYAMKRKLPLIIFAASGGARMQEGLFSLMQMAKTTAAIEKFKDAGGLFISYLTNPTTGGVSASFASLGDIIIAEPGALICFAGPRVIEQTIGQKLPEGFQHSEFLLEHGMIDMIVDRKDMKQTLSKILKMHVNTGGEA</sequence>
<evidence type="ECO:0000255" key="1">
    <source>
        <dbReference type="HAMAP-Rule" id="MF_01395"/>
    </source>
</evidence>
<evidence type="ECO:0000255" key="2">
    <source>
        <dbReference type="PROSITE-ProRule" id="PRU01136"/>
    </source>
</evidence>
<dbReference type="EC" id="2.1.3.15" evidence="1"/>
<dbReference type="EMBL" id="CP001104">
    <property type="protein sequence ID" value="ACR72716.1"/>
    <property type="molecule type" value="Genomic_DNA"/>
</dbReference>
<dbReference type="RefSeq" id="WP_012739949.1">
    <property type="nucleotide sequence ID" value="NC_012778.1"/>
</dbReference>
<dbReference type="SMR" id="C4Z3C6"/>
<dbReference type="STRING" id="515620.EUBELI_01725"/>
<dbReference type="GeneID" id="71415258"/>
<dbReference type="KEGG" id="eel:EUBELI_01725"/>
<dbReference type="eggNOG" id="COG0777">
    <property type="taxonomic scope" value="Bacteria"/>
</dbReference>
<dbReference type="HOGENOM" id="CLU_015486_1_1_9"/>
<dbReference type="UniPathway" id="UPA00655">
    <property type="reaction ID" value="UER00711"/>
</dbReference>
<dbReference type="Proteomes" id="UP000001476">
    <property type="component" value="Chromosome"/>
</dbReference>
<dbReference type="GO" id="GO:0009317">
    <property type="term" value="C:acetyl-CoA carboxylase complex"/>
    <property type="evidence" value="ECO:0007669"/>
    <property type="project" value="InterPro"/>
</dbReference>
<dbReference type="GO" id="GO:0003989">
    <property type="term" value="F:acetyl-CoA carboxylase activity"/>
    <property type="evidence" value="ECO:0007669"/>
    <property type="project" value="InterPro"/>
</dbReference>
<dbReference type="GO" id="GO:0005524">
    <property type="term" value="F:ATP binding"/>
    <property type="evidence" value="ECO:0007669"/>
    <property type="project" value="UniProtKB-KW"/>
</dbReference>
<dbReference type="GO" id="GO:0016743">
    <property type="term" value="F:carboxyl- or carbamoyltransferase activity"/>
    <property type="evidence" value="ECO:0007669"/>
    <property type="project" value="UniProtKB-UniRule"/>
</dbReference>
<dbReference type="GO" id="GO:0006633">
    <property type="term" value="P:fatty acid biosynthetic process"/>
    <property type="evidence" value="ECO:0007669"/>
    <property type="project" value="UniProtKB-KW"/>
</dbReference>
<dbReference type="GO" id="GO:2001295">
    <property type="term" value="P:malonyl-CoA biosynthetic process"/>
    <property type="evidence" value="ECO:0007669"/>
    <property type="project" value="UniProtKB-UniRule"/>
</dbReference>
<dbReference type="Gene3D" id="3.90.226.10">
    <property type="entry name" value="2-enoyl-CoA Hydratase, Chain A, domain 1"/>
    <property type="match status" value="1"/>
</dbReference>
<dbReference type="HAMAP" id="MF_01395">
    <property type="entry name" value="AcetylCoA_CT_beta"/>
    <property type="match status" value="1"/>
</dbReference>
<dbReference type="InterPro" id="IPR034733">
    <property type="entry name" value="AcCoA_carboxyl_beta"/>
</dbReference>
<dbReference type="InterPro" id="IPR000438">
    <property type="entry name" value="Acetyl_CoA_COase_Trfase_b_su"/>
</dbReference>
<dbReference type="InterPro" id="IPR029045">
    <property type="entry name" value="ClpP/crotonase-like_dom_sf"/>
</dbReference>
<dbReference type="InterPro" id="IPR011762">
    <property type="entry name" value="COA_CT_N"/>
</dbReference>
<dbReference type="PANTHER" id="PTHR42995">
    <property type="entry name" value="ACETYL-COENZYME A CARBOXYLASE CARBOXYL TRANSFERASE SUBUNIT BETA, CHLOROPLASTIC"/>
    <property type="match status" value="1"/>
</dbReference>
<dbReference type="PANTHER" id="PTHR42995:SF5">
    <property type="entry name" value="ACETYL-COENZYME A CARBOXYLASE CARBOXYL TRANSFERASE SUBUNIT BETA, CHLOROPLASTIC"/>
    <property type="match status" value="1"/>
</dbReference>
<dbReference type="Pfam" id="PF01039">
    <property type="entry name" value="Carboxyl_trans"/>
    <property type="match status" value="1"/>
</dbReference>
<dbReference type="PRINTS" id="PR01070">
    <property type="entry name" value="ACCCTRFRASEB"/>
</dbReference>
<dbReference type="SUPFAM" id="SSF52096">
    <property type="entry name" value="ClpP/crotonase"/>
    <property type="match status" value="1"/>
</dbReference>
<dbReference type="PROSITE" id="PS50980">
    <property type="entry name" value="COA_CT_NTER"/>
    <property type="match status" value="1"/>
</dbReference>
<protein>
    <recommendedName>
        <fullName evidence="1">Acetyl-coenzyme A carboxylase carboxyl transferase subunit beta 1</fullName>
        <shortName evidence="1">ACCase subunit beta 1</shortName>
        <shortName evidence="1">Acetyl-CoA carboxylase carboxyltransferase subunit beta 1</shortName>
        <ecNumber evidence="1">2.1.3.15</ecNumber>
    </recommendedName>
</protein>
<gene>
    <name evidence="1" type="primary">accD1</name>
    <name type="ordered locus">EUBELI_01725</name>
</gene>
<reference key="1">
    <citation type="journal article" date="2009" name="Proc. Natl. Acad. Sci. U.S.A.">
        <title>Characterizing a model human gut microbiota composed of members of its two dominant bacterial phyla.</title>
        <authorList>
            <person name="Mahowald M.A."/>
            <person name="Rey F.E."/>
            <person name="Seedorf H."/>
            <person name="Turnbaugh P.J."/>
            <person name="Fulton R.S."/>
            <person name="Wollam A."/>
            <person name="Shah N."/>
            <person name="Wang C."/>
            <person name="Magrini V."/>
            <person name="Wilson R.K."/>
            <person name="Cantarel B.L."/>
            <person name="Coutinho P.M."/>
            <person name="Henrissat B."/>
            <person name="Crock L.W."/>
            <person name="Russell A."/>
            <person name="Verberkmoes N.C."/>
            <person name="Hettich R.L."/>
            <person name="Gordon J.I."/>
        </authorList>
    </citation>
    <scope>NUCLEOTIDE SEQUENCE [LARGE SCALE GENOMIC DNA]</scope>
    <source>
        <strain>ATCC 27750 / DSM 3376 / VPI C15-48 / C15-B4</strain>
    </source>
</reference>
<proteinExistence type="inferred from homology"/>
<keyword id="KW-0067">ATP-binding</keyword>
<keyword id="KW-0963">Cytoplasm</keyword>
<keyword id="KW-0275">Fatty acid biosynthesis</keyword>
<keyword id="KW-0276">Fatty acid metabolism</keyword>
<keyword id="KW-0444">Lipid biosynthesis</keyword>
<keyword id="KW-0443">Lipid metabolism</keyword>
<keyword id="KW-0547">Nucleotide-binding</keyword>
<keyword id="KW-1185">Reference proteome</keyword>
<keyword id="KW-0808">Transferase</keyword>
<feature type="chain" id="PRO_0000389738" description="Acetyl-coenzyme A carboxylase carboxyl transferase subunit beta 1">
    <location>
        <begin position="1"/>
        <end position="257"/>
    </location>
</feature>
<feature type="domain" description="CoA carboxyltransferase N-terminal" evidence="2">
    <location>
        <begin position="1"/>
        <end position="257"/>
    </location>
</feature>
<accession>C4Z3C6</accession>